<comment type="similarity">
    <text evidence="1">Belongs to the bacterial ribosomal protein bS21 family.</text>
</comment>
<keyword id="KW-0687">Ribonucleoprotein</keyword>
<keyword id="KW-0689">Ribosomal protein</keyword>
<evidence type="ECO:0000255" key="1">
    <source>
        <dbReference type="HAMAP-Rule" id="MF_00358"/>
    </source>
</evidence>
<evidence type="ECO:0000305" key="2"/>
<feature type="chain" id="PRO_0000178295" description="Small ribosomal subunit protein bS21">
    <location>
        <begin position="1"/>
        <end position="57"/>
    </location>
</feature>
<gene>
    <name evidence="1" type="primary">rpsU</name>
    <name type="ordered locus">BCE33L4056</name>
</gene>
<reference key="1">
    <citation type="journal article" date="2006" name="J. Bacteriol.">
        <title>Pathogenomic sequence analysis of Bacillus cereus and Bacillus thuringiensis isolates closely related to Bacillus anthracis.</title>
        <authorList>
            <person name="Han C.S."/>
            <person name="Xie G."/>
            <person name="Challacombe J.F."/>
            <person name="Altherr M.R."/>
            <person name="Bhotika S.S."/>
            <person name="Bruce D."/>
            <person name="Campbell C.S."/>
            <person name="Campbell M.L."/>
            <person name="Chen J."/>
            <person name="Chertkov O."/>
            <person name="Cleland C."/>
            <person name="Dimitrijevic M."/>
            <person name="Doggett N.A."/>
            <person name="Fawcett J.J."/>
            <person name="Glavina T."/>
            <person name="Goodwin L.A."/>
            <person name="Hill K.K."/>
            <person name="Hitchcock P."/>
            <person name="Jackson P.J."/>
            <person name="Keim P."/>
            <person name="Kewalramani A.R."/>
            <person name="Longmire J."/>
            <person name="Lucas S."/>
            <person name="Malfatti S."/>
            <person name="McMurry K."/>
            <person name="Meincke L.J."/>
            <person name="Misra M."/>
            <person name="Moseman B.L."/>
            <person name="Mundt M."/>
            <person name="Munk A.C."/>
            <person name="Okinaka R.T."/>
            <person name="Parson-Quintana B."/>
            <person name="Reilly L.P."/>
            <person name="Richardson P."/>
            <person name="Robinson D.L."/>
            <person name="Rubin E."/>
            <person name="Saunders E."/>
            <person name="Tapia R."/>
            <person name="Tesmer J.G."/>
            <person name="Thayer N."/>
            <person name="Thompson L.S."/>
            <person name="Tice H."/>
            <person name="Ticknor L.O."/>
            <person name="Wills P.L."/>
            <person name="Brettin T.S."/>
            <person name="Gilna P."/>
        </authorList>
    </citation>
    <scope>NUCLEOTIDE SEQUENCE [LARGE SCALE GENOMIC DNA]</scope>
    <source>
        <strain>ZK / E33L</strain>
    </source>
</reference>
<proteinExistence type="inferred from homology"/>
<dbReference type="EMBL" id="CP000001">
    <property type="protein sequence ID" value="AAU16212.1"/>
    <property type="molecule type" value="Genomic_DNA"/>
</dbReference>
<dbReference type="RefSeq" id="WP_000048061.1">
    <property type="nucleotide sequence ID" value="NZ_CP009968.1"/>
</dbReference>
<dbReference type="SMR" id="Q634N2"/>
<dbReference type="GeneID" id="93006791"/>
<dbReference type="KEGG" id="bcz:BCE33L4056"/>
<dbReference type="PATRIC" id="fig|288681.22.peg.1334"/>
<dbReference type="Proteomes" id="UP000002612">
    <property type="component" value="Chromosome"/>
</dbReference>
<dbReference type="GO" id="GO:1990904">
    <property type="term" value="C:ribonucleoprotein complex"/>
    <property type="evidence" value="ECO:0007669"/>
    <property type="project" value="UniProtKB-KW"/>
</dbReference>
<dbReference type="GO" id="GO:0005840">
    <property type="term" value="C:ribosome"/>
    <property type="evidence" value="ECO:0007669"/>
    <property type="project" value="UniProtKB-KW"/>
</dbReference>
<dbReference type="GO" id="GO:0003735">
    <property type="term" value="F:structural constituent of ribosome"/>
    <property type="evidence" value="ECO:0007669"/>
    <property type="project" value="InterPro"/>
</dbReference>
<dbReference type="GO" id="GO:0006412">
    <property type="term" value="P:translation"/>
    <property type="evidence" value="ECO:0007669"/>
    <property type="project" value="UniProtKB-UniRule"/>
</dbReference>
<dbReference type="Gene3D" id="1.20.5.1150">
    <property type="entry name" value="Ribosomal protein S8"/>
    <property type="match status" value="1"/>
</dbReference>
<dbReference type="HAMAP" id="MF_00358">
    <property type="entry name" value="Ribosomal_bS21"/>
    <property type="match status" value="1"/>
</dbReference>
<dbReference type="InterPro" id="IPR001911">
    <property type="entry name" value="Ribosomal_bS21"/>
</dbReference>
<dbReference type="InterPro" id="IPR018278">
    <property type="entry name" value="Ribosomal_bS21_CS"/>
</dbReference>
<dbReference type="InterPro" id="IPR038380">
    <property type="entry name" value="Ribosomal_bS21_sf"/>
</dbReference>
<dbReference type="NCBIfam" id="TIGR00030">
    <property type="entry name" value="S21p"/>
    <property type="match status" value="1"/>
</dbReference>
<dbReference type="PANTHER" id="PTHR21109">
    <property type="entry name" value="MITOCHONDRIAL 28S RIBOSOMAL PROTEIN S21"/>
    <property type="match status" value="1"/>
</dbReference>
<dbReference type="PANTHER" id="PTHR21109:SF22">
    <property type="entry name" value="SMALL RIBOSOMAL SUBUNIT PROTEIN BS21"/>
    <property type="match status" value="1"/>
</dbReference>
<dbReference type="Pfam" id="PF01165">
    <property type="entry name" value="Ribosomal_S21"/>
    <property type="match status" value="1"/>
</dbReference>
<dbReference type="PRINTS" id="PR00976">
    <property type="entry name" value="RIBOSOMALS21"/>
</dbReference>
<dbReference type="PROSITE" id="PS01181">
    <property type="entry name" value="RIBOSOMAL_S21"/>
    <property type="match status" value="1"/>
</dbReference>
<sequence>MSKTVVRKNESLEDALRRFKRSVSKTGTLAEARKREFYEKPSVKRKKKSEAARKRKF</sequence>
<organism>
    <name type="scientific">Bacillus cereus (strain ZK / E33L)</name>
    <dbReference type="NCBI Taxonomy" id="288681"/>
    <lineage>
        <taxon>Bacteria</taxon>
        <taxon>Bacillati</taxon>
        <taxon>Bacillota</taxon>
        <taxon>Bacilli</taxon>
        <taxon>Bacillales</taxon>
        <taxon>Bacillaceae</taxon>
        <taxon>Bacillus</taxon>
        <taxon>Bacillus cereus group</taxon>
    </lineage>
</organism>
<accession>Q634N2</accession>
<name>RS21_BACCZ</name>
<protein>
    <recommendedName>
        <fullName evidence="1">Small ribosomal subunit protein bS21</fullName>
    </recommendedName>
    <alternativeName>
        <fullName evidence="2">30S ribosomal protein S21</fullName>
    </alternativeName>
</protein>